<gene>
    <name evidence="13" type="primary">Pde6b</name>
    <name type="synonym">Mpb</name>
    <name type="synonym">Pdeb</name>
    <name evidence="11" type="synonym">rd</name>
</gene>
<organism>
    <name type="scientific">Mus musculus</name>
    <name type="common">Mouse</name>
    <dbReference type="NCBI Taxonomy" id="10090"/>
    <lineage>
        <taxon>Eukaryota</taxon>
        <taxon>Metazoa</taxon>
        <taxon>Chordata</taxon>
        <taxon>Craniata</taxon>
        <taxon>Vertebrata</taxon>
        <taxon>Euteleostomi</taxon>
        <taxon>Mammalia</taxon>
        <taxon>Eutheria</taxon>
        <taxon>Euarchontoglires</taxon>
        <taxon>Glires</taxon>
        <taxon>Rodentia</taxon>
        <taxon>Myomorpha</taxon>
        <taxon>Muroidea</taxon>
        <taxon>Muridae</taxon>
        <taxon>Murinae</taxon>
        <taxon>Mus</taxon>
        <taxon>Mus</taxon>
    </lineage>
</organism>
<accession>P23440</accession>
<accession>Q80UF0</accession>
<evidence type="ECO:0000250" key="1"/>
<evidence type="ECO:0000250" key="2">
    <source>
        <dbReference type="UniProtKB" id="P23439"/>
    </source>
</evidence>
<evidence type="ECO:0000250" key="3">
    <source>
        <dbReference type="UniProtKB" id="P35913"/>
    </source>
</evidence>
<evidence type="ECO:0000250" key="4">
    <source>
        <dbReference type="UniProtKB" id="Q07343"/>
    </source>
</evidence>
<evidence type="ECO:0000255" key="5">
    <source>
        <dbReference type="PROSITE-ProRule" id="PRU01192"/>
    </source>
</evidence>
<evidence type="ECO:0000269" key="6">
    <source>
    </source>
</evidence>
<evidence type="ECO:0000269" key="7">
    <source>
    </source>
</evidence>
<evidence type="ECO:0000269" key="8">
    <source>
    </source>
</evidence>
<evidence type="ECO:0000269" key="9">
    <source>
    </source>
</evidence>
<evidence type="ECO:0000269" key="10">
    <source>
    </source>
</evidence>
<evidence type="ECO:0000303" key="11">
    <source>
    </source>
</evidence>
<evidence type="ECO:0000305" key="12"/>
<evidence type="ECO:0000312" key="13">
    <source>
        <dbReference type="MGI" id="MGI:97525"/>
    </source>
</evidence>
<sequence length="856" mass="98535">MSLSEEQVRSFLDGNPTFAHQYFGKKLSPENVAGACEDGWLADCGSLRELCQVEESAALFELVQDMQESVNMERVVFKILRRLCTILHADRCSLFMYRQRNGIAELATRLFSVQPDSLLEDCLVPPDSEIVFPLDIGIVGHVAQTKKMINVQDVAECPHFSSFADELTDYVTKNILSTPIMNGKDVVAVIMAVNKLDGPCFTSEDEDVFTKYLNFATLNLKIYHLSYLHNCETRRGQVLLWSANKVFEELTDIERQFHKAFYTVRAYLNCERYSVGLLDMTKEKEFFDVWPVLMGEAQPYSGPRTPDGREIVFYKVIDYILHGKEDIKVIPTPPADHWALASGLPTYVAESGFICNIMNASADEMFNFQEGPLDDSGWVIKNVLSMPIVNKKEEIVGVATFYNRKDGKPFDDQDEVLMESLTQFLGWSVLNTDTYDKMNKLENRKDIAQDMVLYHVRCDKDEIQEILPTRDRLGKEPADCEEDELGKILKEELPGPTKFDIYEFHFSDLECTELELVKCGIQMYYELGVVRKFQIPQEVLVRFLFSVSKAYRRITYHNWRHGFNVAQTMFTLLMTGKLKSYYTDLEAFAMVTAGLCHDIDHRGTNNLYQMKSQNPLAKLHGSSILERHHLEFGKFLLAEESLNIYQNLNRRQHEHVIHLMDIAIIATDLALYFKKRTMFQKIVDESKNYEDKKSWVEYLSLETTRKEIVMAMMMTACDLSAITKPWEVQSKVALLVAAEFWEQGDLERTVLDQQPIPMMDRNKAAELPKLQVGFIDFVCTFVYKEFSRFHEEILPMFDRLQNNRKEWKALADEYEAKVKALEEEKKKEEDRVAAKKVGTEVCNGGPAPKSSTCCIL</sequence>
<protein>
    <recommendedName>
        <fullName evidence="12">Rod cGMP-specific 3',5'-cyclic phosphodiesterase subunit beta</fullName>
        <shortName>GMP-PDE beta</shortName>
        <ecNumber evidence="3">3.1.4.35</ecNumber>
    </recommendedName>
</protein>
<feature type="initiator methionine" description="Removed" evidence="2">
    <location>
        <position position="1"/>
    </location>
</feature>
<feature type="chain" id="PRO_0000023350" description="Rod cGMP-specific 3',5'-cyclic phosphodiesterase subunit beta">
    <location>
        <begin position="2"/>
        <end position="853"/>
    </location>
</feature>
<feature type="propeptide" id="PRO_0000023351" description="Removed in mature form" evidence="1">
    <location>
        <begin position="854"/>
        <end position="856"/>
    </location>
</feature>
<feature type="domain" description="GAF 1">
    <location>
        <begin position="71"/>
        <end position="220"/>
    </location>
</feature>
<feature type="domain" description="GAF 2">
    <location>
        <begin position="252"/>
        <end position="429"/>
    </location>
</feature>
<feature type="domain" description="PDEase" evidence="5">
    <location>
        <begin position="481"/>
        <end position="814"/>
    </location>
</feature>
<feature type="active site" description="Proton donor" evidence="4">
    <location>
        <position position="557"/>
    </location>
</feature>
<feature type="binding site" evidence="4">
    <location>
        <position position="561"/>
    </location>
    <ligand>
        <name>a divalent metal cation</name>
        <dbReference type="ChEBI" id="CHEBI:60240"/>
        <label>1</label>
    </ligand>
</feature>
<feature type="binding site" evidence="4">
    <location>
        <position position="597"/>
    </location>
    <ligand>
        <name>a divalent metal cation</name>
        <dbReference type="ChEBI" id="CHEBI:60240"/>
        <label>1</label>
    </ligand>
</feature>
<feature type="binding site" evidence="4">
    <location>
        <position position="598"/>
    </location>
    <ligand>
        <name>a divalent metal cation</name>
        <dbReference type="ChEBI" id="CHEBI:60240"/>
        <label>1</label>
    </ligand>
</feature>
<feature type="binding site" evidence="4">
    <location>
        <position position="598"/>
    </location>
    <ligand>
        <name>a divalent metal cation</name>
        <dbReference type="ChEBI" id="CHEBI:60240"/>
        <label>2</label>
    </ligand>
</feature>
<feature type="binding site" evidence="4">
    <location>
        <position position="718"/>
    </location>
    <ligand>
        <name>a divalent metal cation</name>
        <dbReference type="ChEBI" id="CHEBI:60240"/>
        <label>1</label>
    </ligand>
</feature>
<feature type="modified residue" description="N-acetylserine" evidence="2">
    <location>
        <position position="2"/>
    </location>
</feature>
<feature type="lipid moiety-binding region" description="S-geranylgeranyl cysteine" evidence="1">
    <location>
        <position position="853"/>
    </location>
</feature>
<feature type="splice variant" id="VSP_004592" description="In isoform 2." evidence="12">
    <location>
        <begin position="801"/>
        <end position="856"/>
    </location>
</feature>
<feature type="sequence variant" description="In Rd mouse, causes retinal degeneration." evidence="6">
    <location>
        <begin position="347"/>
        <end position="856"/>
    </location>
</feature>
<feature type="sequence conflict" description="In Ref. 1; CAA39439." evidence="12" ref="1">
    <original>E</original>
    <variation>G</variation>
    <location>
        <position position="5"/>
    </location>
</feature>
<feature type="sequence conflict" description="In Ref. 1; CAA39439." evidence="12" ref="1">
    <original>A</original>
    <variation>S</variation>
    <location>
        <position position="19"/>
    </location>
</feature>
<feature type="sequence conflict" description="In Ref. 1; CAA39439." evidence="12" ref="1">
    <original>EL</original>
    <variation>DV</variation>
    <location>
        <begin position="49"/>
        <end position="50"/>
    </location>
</feature>
<feature type="sequence conflict" description="In Ref. 1; CAA39439." evidence="12" ref="1">
    <original>P</original>
    <variation>T</variation>
    <location>
        <position position="158"/>
    </location>
</feature>
<feature type="sequence conflict" description="In Ref. 1; CAA39439." evidence="12" ref="1">
    <original>L</original>
    <variation>C</variation>
    <location>
        <position position="176"/>
    </location>
</feature>
<feature type="sequence conflict" description="In Ref. 1; CAA39439." evidence="12" ref="1">
    <original>E</original>
    <variation>R</variation>
    <location>
        <position position="232"/>
    </location>
</feature>
<feature type="sequence conflict" description="In Ref. 1; CAA39439." evidence="12" ref="1">
    <original>G</original>
    <variation>S</variation>
    <location>
        <position position="236"/>
    </location>
</feature>
<keyword id="KW-0007">Acetylation</keyword>
<keyword id="KW-0025">Alternative splicing</keyword>
<keyword id="KW-0966">Cell projection</keyword>
<keyword id="KW-0140">cGMP</keyword>
<keyword id="KW-0378">Hydrolase</keyword>
<keyword id="KW-0449">Lipoprotein</keyword>
<keyword id="KW-0460">Magnesium</keyword>
<keyword id="KW-0464">Manganese</keyword>
<keyword id="KW-0472">Membrane</keyword>
<keyword id="KW-0479">Metal-binding</keyword>
<keyword id="KW-0636">Prenylation</keyword>
<keyword id="KW-1185">Reference proteome</keyword>
<keyword id="KW-0677">Repeat</keyword>
<keyword id="KW-0716">Sensory transduction</keyword>
<keyword id="KW-0844">Vision</keyword>
<keyword id="KW-0862">Zinc</keyword>
<dbReference type="EC" id="3.1.4.35" evidence="3"/>
<dbReference type="EMBL" id="X55968">
    <property type="protein sequence ID" value="CAA39439.1"/>
    <property type="molecule type" value="mRNA"/>
</dbReference>
<dbReference type="EMBL" id="X60133">
    <property type="protein sequence ID" value="CAA42719.1"/>
    <property type="molecule type" value="mRNA"/>
</dbReference>
<dbReference type="EMBL" id="AK044364">
    <property type="protein sequence ID" value="BAC31885.1"/>
    <property type="molecule type" value="mRNA"/>
</dbReference>
<dbReference type="EMBL" id="CH466529">
    <property type="protein sequence ID" value="EDL20122.1"/>
    <property type="molecule type" value="Genomic_DNA"/>
</dbReference>
<dbReference type="CCDS" id="CCDS19510.1">
    <molecule id="P23440-1"/>
</dbReference>
<dbReference type="PIR" id="S30762">
    <property type="entry name" value="S30762"/>
</dbReference>
<dbReference type="RefSeq" id="NP_032832.2">
    <molecule id="P23440-1"/>
    <property type="nucleotide sequence ID" value="NM_008806.2"/>
</dbReference>
<dbReference type="SMR" id="P23440"/>
<dbReference type="BioGRID" id="202084">
    <property type="interactions" value="21"/>
</dbReference>
<dbReference type="FunCoup" id="P23440">
    <property type="interactions" value="173"/>
</dbReference>
<dbReference type="STRING" id="10090.ENSMUSP00000031456"/>
<dbReference type="GlyGen" id="P23440">
    <property type="glycosylation" value="1 site"/>
</dbReference>
<dbReference type="iPTMnet" id="P23440"/>
<dbReference type="PhosphoSitePlus" id="P23440"/>
<dbReference type="PaxDb" id="10090-ENSMUSP00000031456"/>
<dbReference type="ProteomicsDB" id="288016">
    <molecule id="P23440-1"/>
</dbReference>
<dbReference type="ProteomicsDB" id="288017">
    <molecule id="P23440-2"/>
</dbReference>
<dbReference type="Antibodypedia" id="8018">
    <property type="antibodies" value="118 antibodies from 26 providers"/>
</dbReference>
<dbReference type="DNASU" id="18587"/>
<dbReference type="Ensembl" id="ENSMUST00000031456.8">
    <molecule id="P23440-1"/>
    <property type="protein sequence ID" value="ENSMUSP00000031456.8"/>
    <property type="gene ID" value="ENSMUSG00000029491.8"/>
</dbReference>
<dbReference type="GeneID" id="18587"/>
<dbReference type="KEGG" id="mmu:18587"/>
<dbReference type="UCSC" id="uc008ynz.1">
    <molecule id="P23440-1"/>
    <property type="organism name" value="mouse"/>
</dbReference>
<dbReference type="AGR" id="MGI:97525"/>
<dbReference type="CTD" id="5158"/>
<dbReference type="MGI" id="MGI:97525">
    <property type="gene designation" value="Pde6b"/>
</dbReference>
<dbReference type="VEuPathDB" id="HostDB:ENSMUSG00000029491"/>
<dbReference type="eggNOG" id="KOG3689">
    <property type="taxonomic scope" value="Eukaryota"/>
</dbReference>
<dbReference type="GeneTree" id="ENSGT00940000156471"/>
<dbReference type="HOGENOM" id="CLU_006980_2_0_1"/>
<dbReference type="InParanoid" id="P23440"/>
<dbReference type="OMA" id="REVYDCE"/>
<dbReference type="OrthoDB" id="546632at2759"/>
<dbReference type="PhylomeDB" id="P23440"/>
<dbReference type="TreeFam" id="TF316499"/>
<dbReference type="Reactome" id="R-MMU-2485179">
    <property type="pathway name" value="Activation of the phototransduction cascade"/>
</dbReference>
<dbReference type="Reactome" id="R-MMU-2514859">
    <property type="pathway name" value="Inactivation, recovery and regulation of the phototransduction cascade"/>
</dbReference>
<dbReference type="Reactome" id="R-MMU-4086398">
    <property type="pathway name" value="Ca2+ pathway"/>
</dbReference>
<dbReference type="BioGRID-ORCS" id="18587">
    <property type="hits" value="3 hits in 76 CRISPR screens"/>
</dbReference>
<dbReference type="ChiTaRS" id="Pde6b">
    <property type="organism name" value="mouse"/>
</dbReference>
<dbReference type="PRO" id="PR:P23440"/>
<dbReference type="Proteomes" id="UP000000589">
    <property type="component" value="Chromosome 5"/>
</dbReference>
<dbReference type="RNAct" id="P23440">
    <property type="molecule type" value="protein"/>
</dbReference>
<dbReference type="Bgee" id="ENSMUSG00000029491">
    <property type="expression patterns" value="Expressed in retinal neural layer and 23 other cell types or tissues"/>
</dbReference>
<dbReference type="GO" id="GO:0001750">
    <property type="term" value="C:photoreceptor outer segment"/>
    <property type="evidence" value="ECO:0000314"/>
    <property type="project" value="MGI"/>
</dbReference>
<dbReference type="GO" id="GO:0005886">
    <property type="term" value="C:plasma membrane"/>
    <property type="evidence" value="ECO:0000304"/>
    <property type="project" value="Reactome"/>
</dbReference>
<dbReference type="GO" id="GO:0047555">
    <property type="term" value="F:3',5'-cyclic-GMP phosphodiesterase activity"/>
    <property type="evidence" value="ECO:0007669"/>
    <property type="project" value="UniProtKB-EC"/>
</dbReference>
<dbReference type="GO" id="GO:0046872">
    <property type="term" value="F:metal ion binding"/>
    <property type="evidence" value="ECO:0007669"/>
    <property type="project" value="UniProtKB-KW"/>
</dbReference>
<dbReference type="GO" id="GO:0009583">
    <property type="term" value="P:detection of light stimulus"/>
    <property type="evidence" value="ECO:0000315"/>
    <property type="project" value="MGI"/>
</dbReference>
<dbReference type="GO" id="GO:0043153">
    <property type="term" value="P:entrainment of circadian clock by photoperiod"/>
    <property type="evidence" value="ECO:0000315"/>
    <property type="project" value="UniProtKB"/>
</dbReference>
<dbReference type="GO" id="GO:0060041">
    <property type="term" value="P:retina development in camera-type eye"/>
    <property type="evidence" value="ECO:0000315"/>
    <property type="project" value="MGI"/>
</dbReference>
<dbReference type="GO" id="GO:1990009">
    <property type="term" value="P:retinal cell apoptotic process"/>
    <property type="evidence" value="ECO:0007669"/>
    <property type="project" value="Ensembl"/>
</dbReference>
<dbReference type="GO" id="GO:0007165">
    <property type="term" value="P:signal transduction"/>
    <property type="evidence" value="ECO:0007669"/>
    <property type="project" value="InterPro"/>
</dbReference>
<dbReference type="GO" id="GO:0007601">
    <property type="term" value="P:visual perception"/>
    <property type="evidence" value="ECO:0007669"/>
    <property type="project" value="UniProtKB-KW"/>
</dbReference>
<dbReference type="CDD" id="cd00077">
    <property type="entry name" value="HDc"/>
    <property type="match status" value="1"/>
</dbReference>
<dbReference type="FunFam" id="1.10.1300.10:FF:000005">
    <property type="entry name" value="Phosphodiesterase"/>
    <property type="match status" value="1"/>
</dbReference>
<dbReference type="FunFam" id="3.30.450.40:FF:000001">
    <property type="entry name" value="Phosphodiesterase"/>
    <property type="match status" value="1"/>
</dbReference>
<dbReference type="FunFam" id="3.30.450.40:FF:000010">
    <property type="entry name" value="Phosphodiesterase"/>
    <property type="match status" value="1"/>
</dbReference>
<dbReference type="Gene3D" id="3.30.450.40">
    <property type="match status" value="2"/>
</dbReference>
<dbReference type="Gene3D" id="1.10.1300.10">
    <property type="entry name" value="3'5'-cyclic nucleotide phosphodiesterase, catalytic domain"/>
    <property type="match status" value="1"/>
</dbReference>
<dbReference type="InterPro" id="IPR003018">
    <property type="entry name" value="GAF"/>
</dbReference>
<dbReference type="InterPro" id="IPR029016">
    <property type="entry name" value="GAF-like_dom_sf"/>
</dbReference>
<dbReference type="InterPro" id="IPR003607">
    <property type="entry name" value="HD/PDEase_dom"/>
</dbReference>
<dbReference type="InterPro" id="IPR023088">
    <property type="entry name" value="PDEase"/>
</dbReference>
<dbReference type="InterPro" id="IPR002073">
    <property type="entry name" value="PDEase_catalytic_dom"/>
</dbReference>
<dbReference type="InterPro" id="IPR036971">
    <property type="entry name" value="PDEase_catalytic_dom_sf"/>
</dbReference>
<dbReference type="InterPro" id="IPR023174">
    <property type="entry name" value="PDEase_CS"/>
</dbReference>
<dbReference type="PANTHER" id="PTHR11347">
    <property type="entry name" value="CYCLIC NUCLEOTIDE PHOSPHODIESTERASE"/>
    <property type="match status" value="1"/>
</dbReference>
<dbReference type="Pfam" id="PF01590">
    <property type="entry name" value="GAF"/>
    <property type="match status" value="2"/>
</dbReference>
<dbReference type="Pfam" id="PF00233">
    <property type="entry name" value="PDEase_I"/>
    <property type="match status" value="1"/>
</dbReference>
<dbReference type="PRINTS" id="PR00387">
    <property type="entry name" value="PDIESTERASE1"/>
</dbReference>
<dbReference type="SMART" id="SM00065">
    <property type="entry name" value="GAF"/>
    <property type="match status" value="2"/>
</dbReference>
<dbReference type="SMART" id="SM00471">
    <property type="entry name" value="HDc"/>
    <property type="match status" value="1"/>
</dbReference>
<dbReference type="SUPFAM" id="SSF55781">
    <property type="entry name" value="GAF domain-like"/>
    <property type="match status" value="2"/>
</dbReference>
<dbReference type="SUPFAM" id="SSF109604">
    <property type="entry name" value="HD-domain/PDEase-like"/>
    <property type="match status" value="1"/>
</dbReference>
<dbReference type="PROSITE" id="PS00126">
    <property type="entry name" value="PDEASE_I_1"/>
    <property type="match status" value="1"/>
</dbReference>
<dbReference type="PROSITE" id="PS51845">
    <property type="entry name" value="PDEASE_I_2"/>
    <property type="match status" value="1"/>
</dbReference>
<comment type="function">
    <text evidence="3 7 10">Rod-specific cGMP phosphodiesterase that catalyzes the hydrolysis of 3',5'-cyclic GMP (By similarity). Necessary for the formation of a functional phosphodiesterase holoenzyme (PubMed:1847109). Involved in retinal circadian rhythm photoentrainment via modulation of UVA and orange light-induced phase-shift of the retina clock (PubMed:30240620). May participate in processes of transmission and amplification of the visual signal (By similarity).</text>
</comment>
<comment type="catalytic activity">
    <reaction evidence="3">
        <text>3',5'-cyclic GMP + H2O = GMP + H(+)</text>
        <dbReference type="Rhea" id="RHEA:16957"/>
        <dbReference type="ChEBI" id="CHEBI:15377"/>
        <dbReference type="ChEBI" id="CHEBI:15378"/>
        <dbReference type="ChEBI" id="CHEBI:57746"/>
        <dbReference type="ChEBI" id="CHEBI:58115"/>
        <dbReference type="EC" id="3.1.4.35"/>
    </reaction>
    <physiologicalReaction direction="left-to-right" evidence="3">
        <dbReference type="Rhea" id="RHEA:16958"/>
    </physiologicalReaction>
</comment>
<comment type="cofactor">
    <cofactor evidence="4">
        <name>a divalent metal cation</name>
        <dbReference type="ChEBI" id="CHEBI:60240"/>
    </cofactor>
    <text evidence="4">Binds 2 divalent metal cations per subunit. Site 1 may preferentially bind zinc ions, while site 2 has a preference for magnesium and/or manganese ions.</text>
</comment>
<comment type="subunit">
    <text>Oligomer composed of two catalytic chains (alpha and beta), an inhibitory chain (gamma) and the delta chain.</text>
</comment>
<comment type="subcellular location">
    <subcellularLocation>
        <location evidence="3">Membrane</location>
        <topology evidence="3">Lipid-anchor</topology>
    </subcellularLocation>
    <subcellularLocation>
        <location evidence="3">Cell projection</location>
        <location evidence="3">Cilium</location>
        <location evidence="3">Photoreceptor outer segment</location>
    </subcellularLocation>
</comment>
<comment type="alternative products">
    <event type="alternative splicing"/>
    <isoform>
        <id>P23440-1</id>
        <name>1</name>
        <sequence type="displayed"/>
    </isoform>
    <isoform>
        <id>P23440-2</id>
        <name>2</name>
        <name>Beta'</name>
        <sequence type="described" ref="VSP_004592"/>
    </isoform>
</comment>
<comment type="disease">
    <text evidence="6 8 9">Defects in Pde6b are the cause of the retinal degeneration (rd) allele, which is characterized by retinal degeneration (PubMed:1656438, PubMed:1977087). The retinal degeneration 1 (rd1) allele also contains a cofounding mutation in the Gpr179 gene (PubMed:25613321).</text>
</comment>
<comment type="disruption phenotype">
    <text evidence="10">Abolishes the retinal photoreceptor layer, outer nuclear layer, and outer plexiform layer in the retinal ultrastructure (PubMed:30240620). Loss of Opn1sw, Opn1mw and Rho expression in the retina (PubMed:30240620). Reduced rate of circadian photoentrainment, UVA and orange light-induced phase-shift response and Fos expression in the suprachiasmatic nuclei (SCN) in the brain (PubMed:30240620). Pde6b and Opn5 double knockout mice also show loss of retinal ultrastructures and a more severe reduction in the rate of circadian photoentrainment, light-induced phase-shift response and Fos expression in the SCN (PubMed:30240620).</text>
</comment>
<comment type="similarity">
    <text evidence="12">Belongs to the cyclic nucleotide phosphodiesterase family.</text>
</comment>
<proteinExistence type="evidence at transcript level"/>
<reference key="1">
    <citation type="journal article" date="1990" name="Nature">
        <title>Retinal degeneration in the rd mouse is caused by a defect in the beta subunit of rod cGMP-phosphodiesterase.</title>
        <authorList>
            <person name="Bowes C."/>
            <person name="Li T."/>
            <person name="Danciger M."/>
            <person name="Baxter L.C."/>
            <person name="Applebury M.L."/>
            <person name="Farber D.B."/>
        </authorList>
    </citation>
    <scope>NUCLEOTIDE SEQUENCE [MRNA] (ISOFORM 1)</scope>
    <scope>INVOLVEMENT IN RETINAL DEGENERATION</scope>
    <source>
        <strain>C57BL/6J</strain>
        <tissue>Retina</tissue>
    </source>
</reference>
<reference key="2">
    <citation type="journal article" date="1991" name="FEBS Lett.">
        <title>Complete cDNA sequences of mouse rod photoreceptor cGMP phosphodiesterase alpha- and beta-subunits, and identification of beta'-, a putative beta-subunit isozyme produced by alternative splicing of the beta-subunit gene.</title>
        <authorList>
            <person name="Baehr W."/>
            <person name="Champagne M.S."/>
            <person name="Lee A.K."/>
            <person name="Pittler S.J."/>
        </authorList>
    </citation>
    <scope>NUCLEOTIDE SEQUENCE [MRNA] (ISOFORM 1)</scope>
    <scope>ALTERNATIVE SPLICING (ISOFORM 2)</scope>
    <scope>FUNCTION</scope>
    <source>
        <tissue>Retina</tissue>
    </source>
</reference>
<reference key="3">
    <citation type="journal article" date="2005" name="Science">
        <title>The transcriptional landscape of the mammalian genome.</title>
        <authorList>
            <person name="Carninci P."/>
            <person name="Kasukawa T."/>
            <person name="Katayama S."/>
            <person name="Gough J."/>
            <person name="Frith M.C."/>
            <person name="Maeda N."/>
            <person name="Oyama R."/>
            <person name="Ravasi T."/>
            <person name="Lenhard B."/>
            <person name="Wells C."/>
            <person name="Kodzius R."/>
            <person name="Shimokawa K."/>
            <person name="Bajic V.B."/>
            <person name="Brenner S.E."/>
            <person name="Batalov S."/>
            <person name="Forrest A.R."/>
            <person name="Zavolan M."/>
            <person name="Davis M.J."/>
            <person name="Wilming L.G."/>
            <person name="Aidinis V."/>
            <person name="Allen J.E."/>
            <person name="Ambesi-Impiombato A."/>
            <person name="Apweiler R."/>
            <person name="Aturaliya R.N."/>
            <person name="Bailey T.L."/>
            <person name="Bansal M."/>
            <person name="Baxter L."/>
            <person name="Beisel K.W."/>
            <person name="Bersano T."/>
            <person name="Bono H."/>
            <person name="Chalk A.M."/>
            <person name="Chiu K.P."/>
            <person name="Choudhary V."/>
            <person name="Christoffels A."/>
            <person name="Clutterbuck D.R."/>
            <person name="Crowe M.L."/>
            <person name="Dalla E."/>
            <person name="Dalrymple B.P."/>
            <person name="de Bono B."/>
            <person name="Della Gatta G."/>
            <person name="di Bernardo D."/>
            <person name="Down T."/>
            <person name="Engstrom P."/>
            <person name="Fagiolini M."/>
            <person name="Faulkner G."/>
            <person name="Fletcher C.F."/>
            <person name="Fukushima T."/>
            <person name="Furuno M."/>
            <person name="Futaki S."/>
            <person name="Gariboldi M."/>
            <person name="Georgii-Hemming P."/>
            <person name="Gingeras T.R."/>
            <person name="Gojobori T."/>
            <person name="Green R.E."/>
            <person name="Gustincich S."/>
            <person name="Harbers M."/>
            <person name="Hayashi Y."/>
            <person name="Hensch T.K."/>
            <person name="Hirokawa N."/>
            <person name="Hill D."/>
            <person name="Huminiecki L."/>
            <person name="Iacono M."/>
            <person name="Ikeo K."/>
            <person name="Iwama A."/>
            <person name="Ishikawa T."/>
            <person name="Jakt M."/>
            <person name="Kanapin A."/>
            <person name="Katoh M."/>
            <person name="Kawasawa Y."/>
            <person name="Kelso J."/>
            <person name="Kitamura H."/>
            <person name="Kitano H."/>
            <person name="Kollias G."/>
            <person name="Krishnan S.P."/>
            <person name="Kruger A."/>
            <person name="Kummerfeld S.K."/>
            <person name="Kurochkin I.V."/>
            <person name="Lareau L.F."/>
            <person name="Lazarevic D."/>
            <person name="Lipovich L."/>
            <person name="Liu J."/>
            <person name="Liuni S."/>
            <person name="McWilliam S."/>
            <person name="Madan Babu M."/>
            <person name="Madera M."/>
            <person name="Marchionni L."/>
            <person name="Matsuda H."/>
            <person name="Matsuzawa S."/>
            <person name="Miki H."/>
            <person name="Mignone F."/>
            <person name="Miyake S."/>
            <person name="Morris K."/>
            <person name="Mottagui-Tabar S."/>
            <person name="Mulder N."/>
            <person name="Nakano N."/>
            <person name="Nakauchi H."/>
            <person name="Ng P."/>
            <person name="Nilsson R."/>
            <person name="Nishiguchi S."/>
            <person name="Nishikawa S."/>
            <person name="Nori F."/>
            <person name="Ohara O."/>
            <person name="Okazaki Y."/>
            <person name="Orlando V."/>
            <person name="Pang K.C."/>
            <person name="Pavan W.J."/>
            <person name="Pavesi G."/>
            <person name="Pesole G."/>
            <person name="Petrovsky N."/>
            <person name="Piazza S."/>
            <person name="Reed J."/>
            <person name="Reid J.F."/>
            <person name="Ring B.Z."/>
            <person name="Ringwald M."/>
            <person name="Rost B."/>
            <person name="Ruan Y."/>
            <person name="Salzberg S.L."/>
            <person name="Sandelin A."/>
            <person name="Schneider C."/>
            <person name="Schoenbach C."/>
            <person name="Sekiguchi K."/>
            <person name="Semple C.A."/>
            <person name="Seno S."/>
            <person name="Sessa L."/>
            <person name="Sheng Y."/>
            <person name="Shibata Y."/>
            <person name="Shimada H."/>
            <person name="Shimada K."/>
            <person name="Silva D."/>
            <person name="Sinclair B."/>
            <person name="Sperling S."/>
            <person name="Stupka E."/>
            <person name="Sugiura K."/>
            <person name="Sultana R."/>
            <person name="Takenaka Y."/>
            <person name="Taki K."/>
            <person name="Tammoja K."/>
            <person name="Tan S.L."/>
            <person name="Tang S."/>
            <person name="Taylor M.S."/>
            <person name="Tegner J."/>
            <person name="Teichmann S.A."/>
            <person name="Ueda H.R."/>
            <person name="van Nimwegen E."/>
            <person name="Verardo R."/>
            <person name="Wei C.L."/>
            <person name="Yagi K."/>
            <person name="Yamanishi H."/>
            <person name="Zabarovsky E."/>
            <person name="Zhu S."/>
            <person name="Zimmer A."/>
            <person name="Hide W."/>
            <person name="Bult C."/>
            <person name="Grimmond S.M."/>
            <person name="Teasdale R.D."/>
            <person name="Liu E.T."/>
            <person name="Brusic V."/>
            <person name="Quackenbush J."/>
            <person name="Wahlestedt C."/>
            <person name="Mattick J.S."/>
            <person name="Hume D.A."/>
            <person name="Kai C."/>
            <person name="Sasaki D."/>
            <person name="Tomaru Y."/>
            <person name="Fukuda S."/>
            <person name="Kanamori-Katayama M."/>
            <person name="Suzuki M."/>
            <person name="Aoki J."/>
            <person name="Arakawa T."/>
            <person name="Iida J."/>
            <person name="Imamura K."/>
            <person name="Itoh M."/>
            <person name="Kato T."/>
            <person name="Kawaji H."/>
            <person name="Kawagashira N."/>
            <person name="Kawashima T."/>
            <person name="Kojima M."/>
            <person name="Kondo S."/>
            <person name="Konno H."/>
            <person name="Nakano K."/>
            <person name="Ninomiya N."/>
            <person name="Nishio T."/>
            <person name="Okada M."/>
            <person name="Plessy C."/>
            <person name="Shibata K."/>
            <person name="Shiraki T."/>
            <person name="Suzuki S."/>
            <person name="Tagami M."/>
            <person name="Waki K."/>
            <person name="Watahiki A."/>
            <person name="Okamura-Oho Y."/>
            <person name="Suzuki H."/>
            <person name="Kawai J."/>
            <person name="Hayashizaki Y."/>
        </authorList>
    </citation>
    <scope>NUCLEOTIDE SEQUENCE [LARGE SCALE MRNA] (ISOFORM 1)</scope>
    <source>
        <strain>C57BL/6J</strain>
        <tissue>Retina</tissue>
    </source>
</reference>
<reference key="4">
    <citation type="submission" date="2005-09" db="EMBL/GenBank/DDBJ databases">
        <authorList>
            <person name="Mural R.J."/>
            <person name="Adams M.D."/>
            <person name="Myers E.W."/>
            <person name="Smith H.O."/>
            <person name="Venter J.C."/>
        </authorList>
    </citation>
    <scope>NUCLEOTIDE SEQUENCE [LARGE SCALE GENOMIC DNA]</scope>
</reference>
<reference key="5">
    <citation type="journal article" date="1991" name="Proc. Natl. Acad. Sci. U.S.A.">
        <title>Identification of a nonsense mutation in the rod photoreceptor cGMP phosphodiesterase beta-subunit gene of the rd mouse.</title>
        <authorList>
            <person name="Pittler S.J."/>
            <person name="Baehr W."/>
        </authorList>
    </citation>
    <scope>INVOLVEMENT IN RETINAL DEGENERATION</scope>
    <scope>VARIANT RETINAL DEGENERATION 347-TYR--LEU-856 DEL</scope>
</reference>
<reference key="6">
    <citation type="journal article" date="2015" name="Nat. Commun.">
        <title>Gene therapy restores vision in rd1 mice after removal of a confounding mutation in Gpr179.</title>
        <authorList>
            <person name="Nishiguchi K.M."/>
            <person name="Carvalho L.S."/>
            <person name="Rizzi M."/>
            <person name="Powell K."/>
            <person name="Holthaus S.M."/>
            <person name="Azam S.A."/>
            <person name="Duran Y."/>
            <person name="Ribeiro J."/>
            <person name="Luhmann U.F."/>
            <person name="Bainbridge J.W."/>
            <person name="Smith A.J."/>
            <person name="Ali R.R."/>
        </authorList>
    </citation>
    <scope>INVOLVEMENT IN RETINAL DEGENERATION</scope>
</reference>
<reference key="7">
    <citation type="journal article" date="2018" name="IScience">
        <title>Impaired Circadian Photoentrainment in Opn5-Null Mice.</title>
        <authorList>
            <person name="Ota W."/>
            <person name="Nakane Y."/>
            <person name="Hattar S."/>
            <person name="Yoshimura T."/>
        </authorList>
    </citation>
    <scope>FUNCTION</scope>
    <scope>DISRUPTION PHENOTYPE</scope>
</reference>
<name>PDE6B_MOUSE</name>